<protein>
    <recommendedName>
        <fullName>Mediator of DNA damage checkpoint protein 1</fullName>
    </recommendedName>
</protein>
<name>MDC1_RAT</name>
<dbReference type="EMBL" id="BX883048">
    <property type="protein sequence ID" value="CAE84032.1"/>
    <property type="status" value="ALT_SEQ"/>
    <property type="molecule type" value="Genomic_DNA"/>
</dbReference>
<dbReference type="EMBL" id="BC085955">
    <property type="protein sequence ID" value="AAH85955.1"/>
    <property type="status" value="ALT_INIT"/>
    <property type="molecule type" value="mRNA"/>
</dbReference>
<dbReference type="RefSeq" id="NP_001159747.1">
    <property type="nucleotide sequence ID" value="NM_001166275.1"/>
</dbReference>
<dbReference type="SMR" id="Q5U2M8"/>
<dbReference type="FunCoup" id="Q5U2M8">
    <property type="interactions" value="1887"/>
</dbReference>
<dbReference type="STRING" id="10116.ENSRNOP00000049009"/>
<dbReference type="GlyGen" id="Q5U2M8">
    <property type="glycosylation" value="3 sites"/>
</dbReference>
<dbReference type="iPTMnet" id="Q5U2M8"/>
<dbReference type="PhosphoSitePlus" id="Q5U2M8"/>
<dbReference type="PaxDb" id="10116-ENSRNOP00000049009"/>
<dbReference type="Ensembl" id="ENSRNOT00000046798.5">
    <property type="protein sequence ID" value="ENSRNOP00000049009.4"/>
    <property type="gene ID" value="ENSRNOG00000032813.5"/>
</dbReference>
<dbReference type="GeneID" id="309595"/>
<dbReference type="KEGG" id="rno:309595"/>
<dbReference type="UCSC" id="RGD:1559468">
    <property type="organism name" value="rat"/>
</dbReference>
<dbReference type="AGR" id="RGD:1559468"/>
<dbReference type="CTD" id="9656"/>
<dbReference type="RGD" id="1559468">
    <property type="gene designation" value="Mdc1"/>
</dbReference>
<dbReference type="eggNOG" id="KOG2043">
    <property type="taxonomic scope" value="Eukaryota"/>
</dbReference>
<dbReference type="GeneTree" id="ENSGT00940000161757"/>
<dbReference type="HOGENOM" id="CLU_003038_0_0_1"/>
<dbReference type="InParanoid" id="Q5U2M8"/>
<dbReference type="PhylomeDB" id="Q5U2M8"/>
<dbReference type="Reactome" id="R-RNO-3108214">
    <property type="pathway name" value="SUMOylation of DNA damage response and repair proteins"/>
</dbReference>
<dbReference type="Reactome" id="R-RNO-5693565">
    <property type="pathway name" value="Recruitment and ATM-mediated phosphorylation of repair and signaling proteins at DNA double strand breaks"/>
</dbReference>
<dbReference type="Reactome" id="R-RNO-5693571">
    <property type="pathway name" value="Nonhomologous End-Joining (NHEJ)"/>
</dbReference>
<dbReference type="Reactome" id="R-RNO-5693607">
    <property type="pathway name" value="Processing of DNA double-strand break ends"/>
</dbReference>
<dbReference type="Reactome" id="R-RNO-69473">
    <property type="pathway name" value="G2/M DNA damage checkpoint"/>
</dbReference>
<dbReference type="PRO" id="PR:Q5U2M8"/>
<dbReference type="Proteomes" id="UP000002494">
    <property type="component" value="Chromosome 20"/>
</dbReference>
<dbReference type="Bgee" id="ENSRNOG00000032813">
    <property type="expression patterns" value="Expressed in testis and 18 other cell types or tissues"/>
</dbReference>
<dbReference type="GO" id="GO:0005694">
    <property type="term" value="C:chromosome"/>
    <property type="evidence" value="ECO:0000250"/>
    <property type="project" value="UniProtKB"/>
</dbReference>
<dbReference type="GO" id="GO:0005634">
    <property type="term" value="C:nucleus"/>
    <property type="evidence" value="ECO:0000266"/>
    <property type="project" value="RGD"/>
</dbReference>
<dbReference type="GO" id="GO:0035861">
    <property type="term" value="C:site of double-strand break"/>
    <property type="evidence" value="ECO:0000250"/>
    <property type="project" value="UniProtKB"/>
</dbReference>
<dbReference type="GO" id="GO:0140463">
    <property type="term" value="F:chromatin-protein adaptor activity"/>
    <property type="evidence" value="ECO:0000250"/>
    <property type="project" value="UniProtKB"/>
</dbReference>
<dbReference type="GO" id="GO:0140566">
    <property type="term" value="F:histone reader activity"/>
    <property type="evidence" value="ECO:0000250"/>
    <property type="project" value="UniProtKB"/>
</dbReference>
<dbReference type="GO" id="GO:0006974">
    <property type="term" value="P:DNA damage response"/>
    <property type="evidence" value="ECO:0000266"/>
    <property type="project" value="RGD"/>
</dbReference>
<dbReference type="GO" id="GO:0006281">
    <property type="term" value="P:DNA repair"/>
    <property type="evidence" value="ECO:0007669"/>
    <property type="project" value="UniProtKB-KW"/>
</dbReference>
<dbReference type="GO" id="GO:0000076">
    <property type="term" value="P:DNA replication checkpoint signaling"/>
    <property type="evidence" value="ECO:0000250"/>
    <property type="project" value="UniProtKB"/>
</dbReference>
<dbReference type="GO" id="GO:1990166">
    <property type="term" value="P:protein localization to site of double-strand break"/>
    <property type="evidence" value="ECO:0000250"/>
    <property type="project" value="UniProtKB"/>
</dbReference>
<dbReference type="CDD" id="cd17744">
    <property type="entry name" value="BRCT_MDC1_rpt1"/>
    <property type="match status" value="1"/>
</dbReference>
<dbReference type="CDD" id="cd18441">
    <property type="entry name" value="BRCT_MDC1_rpt2"/>
    <property type="match status" value="1"/>
</dbReference>
<dbReference type="CDD" id="cd22665">
    <property type="entry name" value="FHA_MDC1"/>
    <property type="match status" value="1"/>
</dbReference>
<dbReference type="Gene3D" id="2.60.200.20">
    <property type="match status" value="1"/>
</dbReference>
<dbReference type="Gene3D" id="3.40.50.10190">
    <property type="entry name" value="BRCT domain"/>
    <property type="match status" value="2"/>
</dbReference>
<dbReference type="InterPro" id="IPR001357">
    <property type="entry name" value="BRCT_dom"/>
</dbReference>
<dbReference type="InterPro" id="IPR036420">
    <property type="entry name" value="BRCT_dom_sf"/>
</dbReference>
<dbReference type="InterPro" id="IPR051579">
    <property type="entry name" value="DDR_Transcriptional_Reg"/>
</dbReference>
<dbReference type="InterPro" id="IPR000253">
    <property type="entry name" value="FHA_dom"/>
</dbReference>
<dbReference type="InterPro" id="IPR008984">
    <property type="entry name" value="SMAD_FHA_dom_sf"/>
</dbReference>
<dbReference type="PANTHER" id="PTHR23196:SF34">
    <property type="entry name" value="MEDIATOR OF DNA DAMAGE CHECKPOINT PROTEIN 1"/>
    <property type="match status" value="1"/>
</dbReference>
<dbReference type="PANTHER" id="PTHR23196">
    <property type="entry name" value="PAX TRANSCRIPTION ACTIVATION DOMAIN INTERACTING PROTEIN"/>
    <property type="match status" value="1"/>
</dbReference>
<dbReference type="Pfam" id="PF16589">
    <property type="entry name" value="BRCT_2"/>
    <property type="match status" value="1"/>
</dbReference>
<dbReference type="Pfam" id="PF00498">
    <property type="entry name" value="FHA"/>
    <property type="match status" value="1"/>
</dbReference>
<dbReference type="Pfam" id="PF16770">
    <property type="entry name" value="RTT107_BRCT_5"/>
    <property type="match status" value="1"/>
</dbReference>
<dbReference type="SMART" id="SM00292">
    <property type="entry name" value="BRCT"/>
    <property type="match status" value="2"/>
</dbReference>
<dbReference type="SMART" id="SM00240">
    <property type="entry name" value="FHA"/>
    <property type="match status" value="1"/>
</dbReference>
<dbReference type="SUPFAM" id="SSF52113">
    <property type="entry name" value="BRCT domain"/>
    <property type="match status" value="2"/>
</dbReference>
<dbReference type="SUPFAM" id="SSF49879">
    <property type="entry name" value="SMAD/FHA domain"/>
    <property type="match status" value="1"/>
</dbReference>
<dbReference type="PROSITE" id="PS50172">
    <property type="entry name" value="BRCT"/>
    <property type="match status" value="2"/>
</dbReference>
<dbReference type="PROSITE" id="PS50006">
    <property type="entry name" value="FHA_DOMAIN"/>
    <property type="match status" value="1"/>
</dbReference>
<proteinExistence type="evidence at protein level"/>
<sequence length="1279" mass="136948">MENTQVIDWDAEEEEETEISSGSLGYSVEPIGRLRFFSGTHGPERDFPLYLGKNVVGRSPDCSVALPFPSISKQHAVIEISAWNKAPILQDCGSLNGTQIVKPPRVLAPGVSHRLRDQELILFADFPCQYHRLNVPPPLVPRSLLTIEKTPRIRGRSQNSRVLLAEDSEEEGDFPSGRSVANGSRNTASPSATVVPESDEEGSSPGPSVPGPSSPFGLGSDTDESQGQQPGVEESSLADNSGAAGEPEQPEVNGVTTGTLAQPTKDKFKDTKMKEEAGSAGVPVGSVVEGSPTLGEDSDTEADEERQPSGSGDSDTDVEEERVPVKKNQVLLGVGIGGPGARGVAHLQDSPTGSDTDVEEDKTALAAPPERSHTAMVINSDTDEEERGEEEEVSAALTLARLKERGIALWSGEPGTEEVKSQPQVLVERSQSASGRDSDTDVEEGSSGGKREIVPDSPMDVDETLTVTQPESQPPCRPNDVDEDVDMSSPGSHLEGKKASSALVDKNRAQVEEEVPGPSVTLGEKHQVPLEGAQPPEEARETAVQEGSSSPVADIRMSQQPVAEDAGTECAAAVSEQKSALEVGAQSRSPAAPVEQVVVRTDTSGDPTLPQREGAQTPTGREREAHVGGTKHAKECCDEPEDLCLSATQCFVEGESQHPGAVQSLEDEPTQVFPCLPQEPGPSHLSLPTPGADTLDVPWEVLATQPFCLREQTETSEPIDTHEAHGSQPSLPGEPPGHQHPVPTSLDHTELLRIDDREMQTVEKAMGHLSCQMMPDGKASGDDPEPSDHRLFSPVPEASASPQSLLTSQSQKQSTPQPMFPTSSSELALPETLHTKPNVRPRRSSRMTPSPHSSAALKPYTTCPTNQPAASRPTSRPTRGRANRSSTRTPELIVPTGPELQPSTSTEQPGIPNLTSQVTEGRAHSTSVNMPEPVLTGPEAQPLTSAEQSVTSNLNPRAQPLTLEPVPQTSHQRRRRATGKQGSRTAPVGPKSYSTPAEPEPQSSASQSSGASEADSPHQKRPRRQVTQKTVVVKEEDPGEIQVKEEPQETAIPTPGKRKRDPAEGETQGNPTRSRRTKPNQEAAAPKVLFTGVVDSRGERAVLALGGSLASSVNEASHLVTDRIRRTVKFLCAVGKGIPILSLNWLYQSRKAGCFLPPDDYLVTDPEQEKNFSFSLRDSLSRARERRLLEDYEIHVTPGVQPPPPQMGEIISCCGGTVLPSMPHSYKLHRVVITCTEDLPRCAIASRLGLPLLSPEFLLTGVLKQEATPEAFVLSNLEM</sequence>
<comment type="function">
    <text evidence="2">Histone reader protein required for checkpoint-mediated cell cycle arrest in response to DNA damage within both the S phase and G2/M phases of the cell cycle. Specifically recognizes and binds histone H2AX phosphorylated at 'Ser-139', a marker of DNA damage, serving as a scaffold for the recruitment of DNA repair and signal transduction proteins to discrete foci of DNA damage sites. Also required for downstream events subsequent to the recruitment of these proteins. These include phosphorylation and activation of the ATM, CHEK1 and CHEK2 kinases, and stabilization of TP53/p53 and apoptosis. ATM and CHEK2 may also be activated independently by a parallel pathway mediated by TP53BP1. Required for chromosomal stability during mitosis by promoting recruitment of TOPBP1 to DNA double strand breaks (DSBs): TOPBP1 forms filamentous assemblies that bridge MDC1 and tether broken chromosomes during mitosis. Required for the repair of DSBs via homologous recombination by promoting recruitment of NBN component of the MRN complex to DSBs.</text>
</comment>
<comment type="subunit">
    <text evidence="2">Homodimer. Interacts with H2AX, which requires phosphorylation of H2AX on 'Ser-139'. Interacts with the MRN complex, composed of MRE11, RAD50, and NBN. Interacts with CHEK2, which requires ATM-mediated phosphorylation of 'Thr-68' within the FHA domain of CHEK2. Interacts constitutively with the BRCA1-BARD1 complex, SMC1A and TP53BP1. Interacts with ATM and FANCD2, and these interactions are reduced upon DNA damage. Also interacts with the PRKDC complex, composed of XRCC6/KU70, XRCC5/KU80 and PRKDC/XRCC7. This interaction may be required for PRKDC autophosphorylation, which is essential for DNA double strand break (DSB) repair. When phosphorylated by ATM, interacts with RNF8 (via FHA domain). Interacts with CEP164. When phosphorylated, interacts with APTX (via FHA-like domain). Interacts (when phosphorylated) with TOPBP1; promoting TOPBP1 localization to DNA damage sites during mitosis. Interacts (when phosphorylated) with NBN; promoting NBN and MRN complex localization to DNA damage sites (By similarity).</text>
</comment>
<comment type="subcellular location">
    <subcellularLocation>
        <location evidence="2">Nucleus</location>
    </subcellularLocation>
    <subcellularLocation>
        <location evidence="2">Chromosome</location>
    </subcellularLocation>
    <text evidence="2">Associated with chromatin. Relocalizes to discrete nuclear foci following DNA damage, this requires 'Ser-139' phosphorylation of H2AX. Colocalizes with APTX at sites of DNA double-strand breaks.</text>
</comment>
<comment type="domain">
    <text evidence="2">Tandemly repeated BRCT domains are characteristic of proteins involved in DNA damage signaling. In MDC1, these repeats are required for localization to chromatin which flanks sites of DNA damage marked by 'Ser-139' phosphorylation of H2AX.</text>
</comment>
<comment type="PTM">
    <text evidence="2">Phosphorylated upon exposure to ionizing radiation (IR), ultraviolet radiation (UV), and hydroxyurea (HU). Phosphorylation in response to IR requires ATM, NBN, and possibly CHEK2. Also phosphorylated during the G2/M phase of the cell cycle and during activation of the mitotic spindle checkpoint. Phosphorylation at Thr-4 by ATM stabilizes and enhances homodimerization via the FHA domain. Phosphorylated at Ser-168 and Ser-198 by CK2 in response to DNA damage during mitosis, promoting interaction with TOPBP1. Phosphorylated by CK2 in response to DNA damage, promoting interaction with NBN and recruitment of the MRN complex to DNA damage sites.</text>
</comment>
<comment type="PTM">
    <text evidence="2">Sumoylation at Lys-1034 by PIAS4 following DNA damage promotes ubiquitin-mediated degradation.</text>
</comment>
<comment type="PTM">
    <text evidence="2">Ubiquitinated by RNF4, leading to proteasomal degradation; undergoes 'Lys-48'-linked polyubiquitination.</text>
</comment>
<comment type="sequence caution" evidence="7">
    <conflict type="erroneous initiation">
        <sequence resource="EMBL-CDS" id="AAH85955"/>
    </conflict>
</comment>
<comment type="sequence caution" evidence="7">
    <conflict type="erroneous gene model prediction">
        <sequence resource="EMBL-CDS" id="CAE84032"/>
    </conflict>
</comment>
<organism>
    <name type="scientific">Rattus norvegicus</name>
    <name type="common">Rat</name>
    <dbReference type="NCBI Taxonomy" id="10116"/>
    <lineage>
        <taxon>Eukaryota</taxon>
        <taxon>Metazoa</taxon>
        <taxon>Chordata</taxon>
        <taxon>Craniata</taxon>
        <taxon>Vertebrata</taxon>
        <taxon>Euteleostomi</taxon>
        <taxon>Mammalia</taxon>
        <taxon>Eutheria</taxon>
        <taxon>Euarchontoglires</taxon>
        <taxon>Glires</taxon>
        <taxon>Rodentia</taxon>
        <taxon>Myomorpha</taxon>
        <taxon>Muroidea</taxon>
        <taxon>Muridae</taxon>
        <taxon>Murinae</taxon>
        <taxon>Rattus</taxon>
    </lineage>
</organism>
<gene>
    <name type="primary">Mdc1</name>
</gene>
<feature type="chain" id="PRO_0000096321" description="Mediator of DNA damage checkpoint protein 1">
    <location>
        <begin position="1"/>
        <end position="1279"/>
    </location>
</feature>
<feature type="domain" description="FHA" evidence="5">
    <location>
        <begin position="54"/>
        <end position="105"/>
    </location>
</feature>
<feature type="domain" description="BRCT 1" evidence="4">
    <location>
        <begin position="1085"/>
        <end position="1163"/>
    </location>
</feature>
<feature type="domain" description="BRCT 2" evidence="4">
    <location>
        <begin position="1184"/>
        <end position="1275"/>
    </location>
</feature>
<feature type="region of interest" description="Interaction with CHEK2" evidence="1">
    <location>
        <begin position="1"/>
        <end position="150"/>
    </location>
</feature>
<feature type="region of interest" description="Disordered" evidence="6">
    <location>
        <begin position="1"/>
        <end position="22"/>
    </location>
</feature>
<feature type="region of interest" description="Interaction with the MRN complex" evidence="1">
    <location>
        <begin position="2"/>
        <end position="222"/>
    </location>
</feature>
<feature type="region of interest" description="Disordered" evidence="6">
    <location>
        <begin position="156"/>
        <end position="394"/>
    </location>
</feature>
<feature type="region of interest" description="Disordered" evidence="6">
    <location>
        <begin position="409"/>
        <end position="634"/>
    </location>
</feature>
<feature type="region of interest" description="Disordered" evidence="6">
    <location>
        <begin position="714"/>
        <end position="744"/>
    </location>
</feature>
<feature type="region of interest" description="Disordered" evidence="6">
    <location>
        <begin position="772"/>
        <end position="1086"/>
    </location>
</feature>
<feature type="compositionally biased region" description="Acidic residues" evidence="6">
    <location>
        <begin position="9"/>
        <end position="18"/>
    </location>
</feature>
<feature type="compositionally biased region" description="Polar residues" evidence="6">
    <location>
        <begin position="179"/>
        <end position="192"/>
    </location>
</feature>
<feature type="compositionally biased region" description="Basic and acidic residues" evidence="6">
    <location>
        <begin position="264"/>
        <end position="277"/>
    </location>
</feature>
<feature type="compositionally biased region" description="Low complexity" evidence="6">
    <location>
        <begin position="278"/>
        <end position="292"/>
    </location>
</feature>
<feature type="compositionally biased region" description="Acidic residues" evidence="6">
    <location>
        <begin position="381"/>
        <end position="393"/>
    </location>
</feature>
<feature type="compositionally biased region" description="Polar residues" evidence="6">
    <location>
        <begin position="421"/>
        <end position="435"/>
    </location>
</feature>
<feature type="compositionally biased region" description="Polar residues" evidence="6">
    <location>
        <begin position="545"/>
        <end position="561"/>
    </location>
</feature>
<feature type="compositionally biased region" description="Basic and acidic residues" evidence="6">
    <location>
        <begin position="620"/>
        <end position="634"/>
    </location>
</feature>
<feature type="compositionally biased region" description="Low complexity" evidence="6">
    <location>
        <begin position="798"/>
        <end position="817"/>
    </location>
</feature>
<feature type="compositionally biased region" description="Polar residues" evidence="6">
    <location>
        <begin position="862"/>
        <end position="889"/>
    </location>
</feature>
<feature type="compositionally biased region" description="Polar residues" evidence="6">
    <location>
        <begin position="901"/>
        <end position="929"/>
    </location>
</feature>
<feature type="compositionally biased region" description="Polar residues" evidence="6">
    <location>
        <begin position="942"/>
        <end position="956"/>
    </location>
</feature>
<feature type="compositionally biased region" description="Low complexity" evidence="6">
    <location>
        <begin position="994"/>
        <end position="1014"/>
    </location>
</feature>
<feature type="compositionally biased region" description="Basic and acidic residues" evidence="6">
    <location>
        <begin position="1032"/>
        <end position="1047"/>
    </location>
</feature>
<feature type="modified residue" description="Phosphothreonine" evidence="2">
    <location>
        <position position="4"/>
    </location>
</feature>
<feature type="modified residue" description="Phosphothreonine" evidence="2">
    <location>
        <position position="146"/>
    </location>
</feature>
<feature type="modified residue" description="Phosphoserine" evidence="8">
    <location>
        <position position="168"/>
    </location>
</feature>
<feature type="modified residue" description="Phosphoserine" evidence="8">
    <location>
        <position position="176"/>
    </location>
</feature>
<feature type="modified residue" description="Phosphoserine" evidence="2">
    <location>
        <position position="198"/>
    </location>
</feature>
<feature type="modified residue" description="Phosphoserine" evidence="2">
    <location>
        <position position="220"/>
    </location>
</feature>
<feature type="modified residue" description="Phosphothreonine" evidence="2">
    <location>
        <position position="222"/>
    </location>
</feature>
<feature type="modified residue" description="Phosphoserine" evidence="8">
    <location>
        <position position="298"/>
    </location>
</feature>
<feature type="modified residue" description="Phosphothreonine" evidence="2">
    <location>
        <position position="300"/>
    </location>
</feature>
<feature type="modified residue" description="Phosphoserine" evidence="2">
    <location>
        <position position="314"/>
    </location>
</feature>
<feature type="modified residue" description="Phosphothreonine" evidence="2">
    <location>
        <position position="316"/>
    </location>
</feature>
<feature type="modified residue" description="Phosphoserine" evidence="8">
    <location>
        <position position="350"/>
    </location>
</feature>
<feature type="modified residue" description="Phosphoserine" evidence="8">
    <location>
        <position position="354"/>
    </location>
</feature>
<feature type="modified residue" description="Phosphothreonine" evidence="8">
    <location>
        <position position="356"/>
    </location>
</feature>
<feature type="modified residue" description="Phosphoserine" evidence="2">
    <location>
        <position position="372"/>
    </location>
</feature>
<feature type="modified residue" description="Phosphoserine" evidence="8">
    <location>
        <position position="380"/>
    </location>
</feature>
<feature type="modified residue" description="Phosphothreonine" evidence="8">
    <location>
        <position position="382"/>
    </location>
</feature>
<feature type="modified residue" description="Phosphoserine" evidence="2">
    <location>
        <position position="394"/>
    </location>
</feature>
<feature type="modified residue" description="Phosphoserine" evidence="8">
    <location>
        <position position="411"/>
    </location>
</feature>
<feature type="modified residue" description="Phosphoserine" evidence="8">
    <location>
        <position position="421"/>
    </location>
</feature>
<feature type="modified residue" description="Phosphoserine" evidence="3">
    <location>
        <position position="434"/>
    </location>
</feature>
<feature type="modified residue" description="Phosphoserine" evidence="8">
    <location>
        <position position="438"/>
    </location>
</feature>
<feature type="modified residue" description="Phosphothreonine" evidence="8">
    <location>
        <position position="440"/>
    </location>
</feature>
<feature type="modified residue" description="Phosphoserine" evidence="3">
    <location>
        <position position="457"/>
    </location>
</feature>
<feature type="modified residue" description="Phosphothreonine" evidence="3">
    <location>
        <position position="466"/>
    </location>
</feature>
<feature type="modified residue" description="Phosphoserine" evidence="3">
    <location>
        <position position="488"/>
    </location>
</feature>
<feature type="modified residue" description="Phosphoserine" evidence="3">
    <location>
        <position position="489"/>
    </location>
</feature>
<feature type="modified residue" description="Phosphoserine" evidence="8">
    <location>
        <position position="550"/>
    </location>
</feature>
<feature type="modified residue" description="Phosphoserine" evidence="8">
    <location>
        <position position="587"/>
    </location>
</feature>
<feature type="modified residue" description="Phosphoserine" evidence="8">
    <location>
        <position position="589"/>
    </location>
</feature>
<feature type="modified residue" description="Phosphoserine" evidence="2">
    <location>
        <position position="730"/>
    </location>
</feature>
<feature type="modified residue" description="Phosphoserine" evidence="2">
    <location>
        <position position="745"/>
    </location>
</feature>
<feature type="modified residue" description="N6-acetyllysine" evidence="2">
    <location>
        <position position="764"/>
    </location>
</feature>
<feature type="modified residue" description="Phosphoserine" evidence="8">
    <location>
        <position position="793"/>
    </location>
</feature>
<feature type="modified residue" description="Phosphoserine" evidence="8">
    <location>
        <position position="801"/>
    </location>
</feature>
<feature type="modified residue" description="Phosphoserine" evidence="2">
    <location>
        <position position="824"/>
    </location>
</feature>
<feature type="modified residue" description="Phosphothreonine" evidence="2">
    <location>
        <position position="889"/>
    </location>
</feature>
<feature type="modified residue" description="Phosphothreonine" evidence="2">
    <location>
        <position position="951"/>
    </location>
</feature>
<feature type="modified residue" description="Phosphoserine" evidence="3">
    <location>
        <position position="1008"/>
    </location>
</feature>
<feature type="modified residue" description="Phosphoserine" evidence="3">
    <location>
        <position position="1009"/>
    </location>
</feature>
<feature type="modified residue" description="Phosphoserine" evidence="3">
    <location>
        <position position="1012"/>
    </location>
</feature>
<feature type="modified residue" description="Phosphoserine" evidence="3">
    <location>
        <position position="1016"/>
    </location>
</feature>
<feature type="modified residue" description="Phosphothreonine" evidence="3">
    <location>
        <position position="1054"/>
    </location>
</feature>
<feature type="cross-link" description="Glycyl lysine isopeptide (Lys-Gly) (interchain with G-Cter in SUMO2)" evidence="2">
    <location>
        <position position="991"/>
    </location>
</feature>
<feature type="cross-link" description="Glycyl lysine isopeptide (Lys-Gly) (interchain with G-Cter in SUMO1); alternate" evidence="2">
    <location>
        <position position="1034"/>
    </location>
</feature>
<feature type="cross-link" description="Glycyl lysine isopeptide (Lys-Gly) (interchain with G-Cter in SUMO2); alternate" evidence="2">
    <location>
        <position position="1034"/>
    </location>
</feature>
<accession>Q5U2M8</accession>
<accession>Q6MG15</accession>
<keyword id="KW-0007">Acetylation</keyword>
<keyword id="KW-0131">Cell cycle</keyword>
<keyword id="KW-0158">Chromosome</keyword>
<keyword id="KW-0227">DNA damage</keyword>
<keyword id="KW-0234">DNA repair</keyword>
<keyword id="KW-1017">Isopeptide bond</keyword>
<keyword id="KW-0539">Nucleus</keyword>
<keyword id="KW-0597">Phosphoprotein</keyword>
<keyword id="KW-1185">Reference proteome</keyword>
<keyword id="KW-0677">Repeat</keyword>
<keyword id="KW-0832">Ubl conjugation</keyword>
<reference key="1">
    <citation type="journal article" date="2004" name="Genome Res.">
        <title>The genomic sequence and comparative analysis of the rat major histocompatibility complex.</title>
        <authorList>
            <person name="Hurt P."/>
            <person name="Walter L."/>
            <person name="Sudbrak R."/>
            <person name="Klages S."/>
            <person name="Mueller I."/>
            <person name="Shiina T."/>
            <person name="Inoko H."/>
            <person name="Lehrach H."/>
            <person name="Guenther E."/>
            <person name="Reinhardt R."/>
            <person name="Himmelbauer H."/>
        </authorList>
    </citation>
    <scope>NUCLEOTIDE SEQUENCE [LARGE SCALE GENOMIC DNA]</scope>
    <source>
        <strain>Brown Norway</strain>
    </source>
</reference>
<reference key="2">
    <citation type="journal article" date="2004" name="Genome Res.">
        <title>The status, quality, and expansion of the NIH full-length cDNA project: the Mammalian Gene Collection (MGC).</title>
        <authorList>
            <consortium name="The MGC Project Team"/>
        </authorList>
    </citation>
    <scope>NUCLEOTIDE SEQUENCE [LARGE SCALE MRNA]</scope>
    <source>
        <strain>Brown Norway</strain>
        <tissue>Testis</tissue>
    </source>
</reference>
<reference key="3">
    <citation type="journal article" date="2012" name="Nat. Commun.">
        <title>Quantitative maps of protein phosphorylation sites across 14 different rat organs and tissues.</title>
        <authorList>
            <person name="Lundby A."/>
            <person name="Secher A."/>
            <person name="Lage K."/>
            <person name="Nordsborg N.B."/>
            <person name="Dmytriyev A."/>
            <person name="Lundby C."/>
            <person name="Olsen J.V."/>
        </authorList>
    </citation>
    <scope>PHOSPHORYLATION [LARGE SCALE ANALYSIS] AT SER-168; SER-176; SER-298; SER-350; SER-354; THR-356; SER-380; THR-382; SER-411; SER-421; SER-438; THR-440; SER-550; SER-587; SER-589; SER-793 AND SER-801</scope>
    <scope>IDENTIFICATION BY MASS SPECTROMETRY [LARGE SCALE ANALYSIS]</scope>
</reference>
<evidence type="ECO:0000250" key="1"/>
<evidence type="ECO:0000250" key="2">
    <source>
        <dbReference type="UniProtKB" id="Q14676"/>
    </source>
</evidence>
<evidence type="ECO:0000250" key="3">
    <source>
        <dbReference type="UniProtKB" id="Q5PSV9"/>
    </source>
</evidence>
<evidence type="ECO:0000255" key="4">
    <source>
        <dbReference type="PROSITE-ProRule" id="PRU00033"/>
    </source>
</evidence>
<evidence type="ECO:0000255" key="5">
    <source>
        <dbReference type="PROSITE-ProRule" id="PRU00086"/>
    </source>
</evidence>
<evidence type="ECO:0000256" key="6">
    <source>
        <dbReference type="SAM" id="MobiDB-lite"/>
    </source>
</evidence>
<evidence type="ECO:0000305" key="7"/>
<evidence type="ECO:0007744" key="8">
    <source>
    </source>
</evidence>